<organism>
    <name type="scientific">Geotalea daltonii (strain DSM 22248 / JCM 15807 / FRC-32)</name>
    <name type="common">Geobacter daltonii</name>
    <dbReference type="NCBI Taxonomy" id="316067"/>
    <lineage>
        <taxon>Bacteria</taxon>
        <taxon>Pseudomonadati</taxon>
        <taxon>Thermodesulfobacteriota</taxon>
        <taxon>Desulfuromonadia</taxon>
        <taxon>Geobacterales</taxon>
        <taxon>Geobacteraceae</taxon>
        <taxon>Geotalea</taxon>
    </lineage>
</organism>
<keyword id="KW-0028">Amino-acid biosynthesis</keyword>
<keyword id="KW-0057">Aromatic amino acid biosynthesis</keyword>
<keyword id="KW-0328">Glycosyltransferase</keyword>
<keyword id="KW-0460">Magnesium</keyword>
<keyword id="KW-0479">Metal-binding</keyword>
<keyword id="KW-1185">Reference proteome</keyword>
<keyword id="KW-0808">Transferase</keyword>
<keyword id="KW-0822">Tryptophan biosynthesis</keyword>
<gene>
    <name evidence="1" type="primary">trpD</name>
    <name type="ordered locus">Geob_3438</name>
</gene>
<name>TRPD_GEODF</name>
<accession>B9M5M2</accession>
<protein>
    <recommendedName>
        <fullName evidence="1">Anthranilate phosphoribosyltransferase</fullName>
        <ecNumber evidence="1">2.4.2.18</ecNumber>
    </recommendedName>
</protein>
<proteinExistence type="inferred from homology"/>
<sequence length="350" mass="37064">MIKKAIARVVEREDLSQSEMIQVMDQIMSGEATPAQIAAFITALRMKGETVAEIAGAARVMRDRATRIRVGKNVLDLDRDDINIDLETILDVVGTGGDGTNTFNISTTVSFVVAACGVKVAKHGNRSVSSACGSADVVEALGISLEVTPETVENCINEAGIGFLYAPALHGAMKFAIGPRKEIGIRTIFNILGPLTNPAGAPCQVLGVYREELVEKLAHVLKNLGCRRGFVVYGMDGMDEITLTTETRMAEVTPEEVKAWLFKPEDLGFARCTMDDLRGGDAVANAVTVRGILEGEKGPKRDVVLINAAFGLVAAGRAANPAEGVKLAVEALDSGAALAKLEKLKALTNA</sequence>
<comment type="function">
    <text evidence="1">Catalyzes the transfer of the phosphoribosyl group of 5-phosphorylribose-1-pyrophosphate (PRPP) to anthranilate to yield N-(5'-phosphoribosyl)-anthranilate (PRA).</text>
</comment>
<comment type="catalytic activity">
    <reaction evidence="1">
        <text>N-(5-phospho-beta-D-ribosyl)anthranilate + diphosphate = 5-phospho-alpha-D-ribose 1-diphosphate + anthranilate</text>
        <dbReference type="Rhea" id="RHEA:11768"/>
        <dbReference type="ChEBI" id="CHEBI:16567"/>
        <dbReference type="ChEBI" id="CHEBI:18277"/>
        <dbReference type="ChEBI" id="CHEBI:33019"/>
        <dbReference type="ChEBI" id="CHEBI:58017"/>
        <dbReference type="EC" id="2.4.2.18"/>
    </reaction>
</comment>
<comment type="cofactor">
    <cofactor evidence="1">
        <name>Mg(2+)</name>
        <dbReference type="ChEBI" id="CHEBI:18420"/>
    </cofactor>
    <text evidence="1">Binds 2 magnesium ions per monomer.</text>
</comment>
<comment type="pathway">
    <text evidence="1">Amino-acid biosynthesis; L-tryptophan biosynthesis; L-tryptophan from chorismate: step 2/5.</text>
</comment>
<comment type="subunit">
    <text evidence="1">Homodimer.</text>
</comment>
<comment type="similarity">
    <text evidence="1">Belongs to the anthranilate phosphoribosyltransferase family.</text>
</comment>
<dbReference type="EC" id="2.4.2.18" evidence="1"/>
<dbReference type="EMBL" id="CP001390">
    <property type="protein sequence ID" value="ACM21781.1"/>
    <property type="molecule type" value="Genomic_DNA"/>
</dbReference>
<dbReference type="RefSeq" id="WP_012648509.1">
    <property type="nucleotide sequence ID" value="NC_011979.1"/>
</dbReference>
<dbReference type="SMR" id="B9M5M2"/>
<dbReference type="STRING" id="316067.Geob_3438"/>
<dbReference type="KEGG" id="geo:Geob_3438"/>
<dbReference type="eggNOG" id="COG0547">
    <property type="taxonomic scope" value="Bacteria"/>
</dbReference>
<dbReference type="HOGENOM" id="CLU_034315_2_1_7"/>
<dbReference type="OrthoDB" id="9806430at2"/>
<dbReference type="UniPathway" id="UPA00035">
    <property type="reaction ID" value="UER00041"/>
</dbReference>
<dbReference type="Proteomes" id="UP000007721">
    <property type="component" value="Chromosome"/>
</dbReference>
<dbReference type="GO" id="GO:0005829">
    <property type="term" value="C:cytosol"/>
    <property type="evidence" value="ECO:0007669"/>
    <property type="project" value="TreeGrafter"/>
</dbReference>
<dbReference type="GO" id="GO:0004048">
    <property type="term" value="F:anthranilate phosphoribosyltransferase activity"/>
    <property type="evidence" value="ECO:0007669"/>
    <property type="project" value="UniProtKB-UniRule"/>
</dbReference>
<dbReference type="GO" id="GO:0000287">
    <property type="term" value="F:magnesium ion binding"/>
    <property type="evidence" value="ECO:0007669"/>
    <property type="project" value="UniProtKB-UniRule"/>
</dbReference>
<dbReference type="GO" id="GO:0000162">
    <property type="term" value="P:L-tryptophan biosynthetic process"/>
    <property type="evidence" value="ECO:0007669"/>
    <property type="project" value="UniProtKB-UniRule"/>
</dbReference>
<dbReference type="FunFam" id="1.20.970.10:FF:000006">
    <property type="entry name" value="Anthranilate phosphoribosyltransferase"/>
    <property type="match status" value="1"/>
</dbReference>
<dbReference type="FunFam" id="3.40.1030.10:FF:000002">
    <property type="entry name" value="Anthranilate phosphoribosyltransferase"/>
    <property type="match status" value="1"/>
</dbReference>
<dbReference type="Gene3D" id="3.40.1030.10">
    <property type="entry name" value="Nucleoside phosphorylase/phosphoribosyltransferase catalytic domain"/>
    <property type="match status" value="1"/>
</dbReference>
<dbReference type="Gene3D" id="1.20.970.10">
    <property type="entry name" value="Transferase, Pyrimidine Nucleoside Phosphorylase, Chain C"/>
    <property type="match status" value="1"/>
</dbReference>
<dbReference type="HAMAP" id="MF_00211">
    <property type="entry name" value="TrpD"/>
    <property type="match status" value="1"/>
</dbReference>
<dbReference type="InterPro" id="IPR005940">
    <property type="entry name" value="Anthranilate_Pribosyl_Tfrase"/>
</dbReference>
<dbReference type="InterPro" id="IPR000312">
    <property type="entry name" value="Glycosyl_Trfase_fam3"/>
</dbReference>
<dbReference type="InterPro" id="IPR017459">
    <property type="entry name" value="Glycosyl_Trfase_fam3_N_dom"/>
</dbReference>
<dbReference type="InterPro" id="IPR036320">
    <property type="entry name" value="Glycosyl_Trfase_fam3_N_dom_sf"/>
</dbReference>
<dbReference type="InterPro" id="IPR035902">
    <property type="entry name" value="Nuc_phospho_transferase"/>
</dbReference>
<dbReference type="NCBIfam" id="TIGR01245">
    <property type="entry name" value="trpD"/>
    <property type="match status" value="1"/>
</dbReference>
<dbReference type="PANTHER" id="PTHR43285">
    <property type="entry name" value="ANTHRANILATE PHOSPHORIBOSYLTRANSFERASE"/>
    <property type="match status" value="1"/>
</dbReference>
<dbReference type="PANTHER" id="PTHR43285:SF2">
    <property type="entry name" value="ANTHRANILATE PHOSPHORIBOSYLTRANSFERASE"/>
    <property type="match status" value="1"/>
</dbReference>
<dbReference type="Pfam" id="PF02885">
    <property type="entry name" value="Glycos_trans_3N"/>
    <property type="match status" value="1"/>
</dbReference>
<dbReference type="Pfam" id="PF00591">
    <property type="entry name" value="Glycos_transf_3"/>
    <property type="match status" value="1"/>
</dbReference>
<dbReference type="SUPFAM" id="SSF52418">
    <property type="entry name" value="Nucleoside phosphorylase/phosphoribosyltransferase catalytic domain"/>
    <property type="match status" value="1"/>
</dbReference>
<dbReference type="SUPFAM" id="SSF47648">
    <property type="entry name" value="Nucleoside phosphorylase/phosphoribosyltransferase N-terminal domain"/>
    <property type="match status" value="1"/>
</dbReference>
<evidence type="ECO:0000255" key="1">
    <source>
        <dbReference type="HAMAP-Rule" id="MF_00211"/>
    </source>
</evidence>
<feature type="chain" id="PRO_1000198824" description="Anthranilate phosphoribosyltransferase">
    <location>
        <begin position="1"/>
        <end position="350"/>
    </location>
</feature>
<feature type="binding site" evidence="1">
    <location>
        <position position="94"/>
    </location>
    <ligand>
        <name>5-phospho-alpha-D-ribose 1-diphosphate</name>
        <dbReference type="ChEBI" id="CHEBI:58017"/>
    </ligand>
</feature>
<feature type="binding site" evidence="1">
    <location>
        <position position="94"/>
    </location>
    <ligand>
        <name>anthranilate</name>
        <dbReference type="ChEBI" id="CHEBI:16567"/>
        <label>1</label>
    </ligand>
</feature>
<feature type="binding site" evidence="1">
    <location>
        <begin position="97"/>
        <end position="98"/>
    </location>
    <ligand>
        <name>5-phospho-alpha-D-ribose 1-diphosphate</name>
        <dbReference type="ChEBI" id="CHEBI:58017"/>
    </ligand>
</feature>
<feature type="binding site" evidence="1">
    <location>
        <position position="102"/>
    </location>
    <ligand>
        <name>5-phospho-alpha-D-ribose 1-diphosphate</name>
        <dbReference type="ChEBI" id="CHEBI:58017"/>
    </ligand>
</feature>
<feature type="binding site" evidence="1">
    <location>
        <begin position="104"/>
        <end position="107"/>
    </location>
    <ligand>
        <name>5-phospho-alpha-D-ribose 1-diphosphate</name>
        <dbReference type="ChEBI" id="CHEBI:58017"/>
    </ligand>
</feature>
<feature type="binding site" evidence="1">
    <location>
        <position position="106"/>
    </location>
    <ligand>
        <name>Mg(2+)</name>
        <dbReference type="ChEBI" id="CHEBI:18420"/>
        <label>1</label>
    </ligand>
</feature>
<feature type="binding site" evidence="1">
    <location>
        <begin position="122"/>
        <end position="130"/>
    </location>
    <ligand>
        <name>5-phospho-alpha-D-ribose 1-diphosphate</name>
        <dbReference type="ChEBI" id="CHEBI:58017"/>
    </ligand>
</feature>
<feature type="binding site" evidence="1">
    <location>
        <position position="125"/>
    </location>
    <ligand>
        <name>anthranilate</name>
        <dbReference type="ChEBI" id="CHEBI:16567"/>
        <label>1</label>
    </ligand>
</feature>
<feature type="binding site" evidence="1">
    <location>
        <position position="134"/>
    </location>
    <ligand>
        <name>5-phospho-alpha-D-ribose 1-diphosphate</name>
        <dbReference type="ChEBI" id="CHEBI:58017"/>
    </ligand>
</feature>
<feature type="binding site" evidence="1">
    <location>
        <position position="180"/>
    </location>
    <ligand>
        <name>anthranilate</name>
        <dbReference type="ChEBI" id="CHEBI:16567"/>
        <label>2</label>
    </ligand>
</feature>
<feature type="binding site" evidence="1">
    <location>
        <position position="239"/>
    </location>
    <ligand>
        <name>Mg(2+)</name>
        <dbReference type="ChEBI" id="CHEBI:18420"/>
        <label>2</label>
    </ligand>
</feature>
<feature type="binding site" evidence="1">
    <location>
        <position position="240"/>
    </location>
    <ligand>
        <name>Mg(2+)</name>
        <dbReference type="ChEBI" id="CHEBI:18420"/>
        <label>1</label>
    </ligand>
</feature>
<feature type="binding site" evidence="1">
    <location>
        <position position="240"/>
    </location>
    <ligand>
        <name>Mg(2+)</name>
        <dbReference type="ChEBI" id="CHEBI:18420"/>
        <label>2</label>
    </ligand>
</feature>
<reference key="1">
    <citation type="submission" date="2009-01" db="EMBL/GenBank/DDBJ databases">
        <title>Complete sequence of Geobacter sp. FRC-32.</title>
        <authorList>
            <consortium name="US DOE Joint Genome Institute"/>
            <person name="Lucas S."/>
            <person name="Copeland A."/>
            <person name="Lapidus A."/>
            <person name="Glavina del Rio T."/>
            <person name="Dalin E."/>
            <person name="Tice H."/>
            <person name="Bruce D."/>
            <person name="Goodwin L."/>
            <person name="Pitluck S."/>
            <person name="Saunders E."/>
            <person name="Brettin T."/>
            <person name="Detter J.C."/>
            <person name="Han C."/>
            <person name="Larimer F."/>
            <person name="Land M."/>
            <person name="Hauser L."/>
            <person name="Kyrpides N."/>
            <person name="Ovchinnikova G."/>
            <person name="Kostka J."/>
            <person name="Richardson P."/>
        </authorList>
    </citation>
    <scope>NUCLEOTIDE SEQUENCE [LARGE SCALE GENOMIC DNA]</scope>
    <source>
        <strain>DSM 22248 / JCM 15807 / FRC-32</strain>
    </source>
</reference>